<organism>
    <name type="scientific">Escherichia coli (strain K12 / DH10B)</name>
    <dbReference type="NCBI Taxonomy" id="316385"/>
    <lineage>
        <taxon>Bacteria</taxon>
        <taxon>Pseudomonadati</taxon>
        <taxon>Pseudomonadota</taxon>
        <taxon>Gammaproteobacteria</taxon>
        <taxon>Enterobacterales</taxon>
        <taxon>Enterobacteriaceae</taxon>
        <taxon>Escherichia</taxon>
    </lineage>
</organism>
<sequence length="408" mass="43867">MSPCENDTPINWKRNLIVAWLGCFLTGAAFSLVMPFLPLYVEQLGVTGHSALNMWSGIVFSITFLFSAIASPFWGGLADRKGRKLMLLRSALGMGIVMVLMGLAQNIWQFLILRALLGLLGGFVPNANALIATQVPRNKSGWALGTLSTGGVSGALLGPMAGGLLADSYGLRPVFFITASVLILCFFVTLFCIREKFQPVSKKEMLHMREVVTSLKNPKLVLSLFVTTLIIQVATGSIAPILTLYVRELAGNVSNVAFISGMIASVPGVAALLSAPRLGKLGDRIGPEKILITALIFSVLLLIPMSYVQTPLQLGILRFLLGAADGALLPAVQTLLVYNSSNQIAGRIFSYNQSFRDIGNVTGPLMGAAISANYGFRAVFLVTAGVVLFNAVYSWNSLRRRRIPQVSN</sequence>
<evidence type="ECO:0000255" key="1">
    <source>
        <dbReference type="HAMAP-Rule" id="MF_01528"/>
    </source>
</evidence>
<proteinExistence type="inferred from homology"/>
<gene>
    <name evidence="1" type="primary">mdtG</name>
    <name type="ordered locus">ECDH10B_1124</name>
</gene>
<dbReference type="EMBL" id="CP000948">
    <property type="protein sequence ID" value="ACB02246.1"/>
    <property type="molecule type" value="Genomic_DNA"/>
</dbReference>
<dbReference type="RefSeq" id="WP_000074172.1">
    <property type="nucleotide sequence ID" value="NC_010473.1"/>
</dbReference>
<dbReference type="SMR" id="B1X9G6"/>
<dbReference type="GeneID" id="75203640"/>
<dbReference type="KEGG" id="ecd:ECDH10B_1124"/>
<dbReference type="HOGENOM" id="CLU_001265_57_3_6"/>
<dbReference type="GO" id="GO:0005886">
    <property type="term" value="C:plasma membrane"/>
    <property type="evidence" value="ECO:0007669"/>
    <property type="project" value="UniProtKB-SubCell"/>
</dbReference>
<dbReference type="GO" id="GO:0022857">
    <property type="term" value="F:transmembrane transporter activity"/>
    <property type="evidence" value="ECO:0007669"/>
    <property type="project" value="UniProtKB-UniRule"/>
</dbReference>
<dbReference type="GO" id="GO:0046677">
    <property type="term" value="P:response to antibiotic"/>
    <property type="evidence" value="ECO:0007669"/>
    <property type="project" value="UniProtKB-KW"/>
</dbReference>
<dbReference type="CDD" id="cd17391">
    <property type="entry name" value="MFS_MdtG_MDR_like"/>
    <property type="match status" value="1"/>
</dbReference>
<dbReference type="FunFam" id="1.20.1250.20:FF:000020">
    <property type="entry name" value="Multidrug resistance protein MdtG"/>
    <property type="match status" value="1"/>
</dbReference>
<dbReference type="FunFam" id="1.20.1250.20:FF:000022">
    <property type="entry name" value="Multidrug resistance protein MdtG"/>
    <property type="match status" value="1"/>
</dbReference>
<dbReference type="Gene3D" id="1.20.1250.20">
    <property type="entry name" value="MFS general substrate transporter like domains"/>
    <property type="match status" value="2"/>
</dbReference>
<dbReference type="HAMAP" id="MF_01528">
    <property type="entry name" value="MFS_MdtG"/>
    <property type="match status" value="1"/>
</dbReference>
<dbReference type="InterPro" id="IPR011701">
    <property type="entry name" value="MFS"/>
</dbReference>
<dbReference type="InterPro" id="IPR020846">
    <property type="entry name" value="MFS_dom"/>
</dbReference>
<dbReference type="InterPro" id="IPR050497">
    <property type="entry name" value="MFS_MdtG_subfamily"/>
</dbReference>
<dbReference type="InterPro" id="IPR036259">
    <property type="entry name" value="MFS_trans_sf"/>
</dbReference>
<dbReference type="InterPro" id="IPR023692">
    <property type="entry name" value="Mutidrug-R_MdtG"/>
</dbReference>
<dbReference type="InterPro" id="IPR001958">
    <property type="entry name" value="Tet-R_TetA/multi-R_MdtG-like"/>
</dbReference>
<dbReference type="NCBIfam" id="NF007372">
    <property type="entry name" value="PRK09874.1"/>
    <property type="match status" value="1"/>
</dbReference>
<dbReference type="PANTHER" id="PTHR43414">
    <property type="entry name" value="MULTIDRUG RESISTANCE PROTEIN MDTG"/>
    <property type="match status" value="1"/>
</dbReference>
<dbReference type="PANTHER" id="PTHR43414:SF6">
    <property type="entry name" value="MULTIDRUG RESISTANCE PROTEIN MDTG"/>
    <property type="match status" value="1"/>
</dbReference>
<dbReference type="Pfam" id="PF07690">
    <property type="entry name" value="MFS_1"/>
    <property type="match status" value="1"/>
</dbReference>
<dbReference type="PRINTS" id="PR01035">
    <property type="entry name" value="TCRTETA"/>
</dbReference>
<dbReference type="SUPFAM" id="SSF103473">
    <property type="entry name" value="MFS general substrate transporter"/>
    <property type="match status" value="1"/>
</dbReference>
<dbReference type="PROSITE" id="PS50850">
    <property type="entry name" value="MFS"/>
    <property type="match status" value="1"/>
</dbReference>
<reference key="1">
    <citation type="journal article" date="2008" name="J. Bacteriol.">
        <title>The complete genome sequence of Escherichia coli DH10B: insights into the biology of a laboratory workhorse.</title>
        <authorList>
            <person name="Durfee T."/>
            <person name="Nelson R."/>
            <person name="Baldwin S."/>
            <person name="Plunkett G. III"/>
            <person name="Burland V."/>
            <person name="Mau B."/>
            <person name="Petrosino J.F."/>
            <person name="Qin X."/>
            <person name="Muzny D.M."/>
            <person name="Ayele M."/>
            <person name="Gibbs R.A."/>
            <person name="Csorgo B."/>
            <person name="Posfai G."/>
            <person name="Weinstock G.M."/>
            <person name="Blattner F.R."/>
        </authorList>
    </citation>
    <scope>NUCLEOTIDE SEQUENCE [LARGE SCALE GENOMIC DNA]</scope>
    <source>
        <strain>K12 / DH10B</strain>
    </source>
</reference>
<accession>B1X9G6</accession>
<feature type="chain" id="PRO_1000200779" description="Multidrug resistance protein MdtG">
    <location>
        <begin position="1"/>
        <end position="408"/>
    </location>
</feature>
<feature type="transmembrane region" description="Helical" evidence="1">
    <location>
        <begin position="16"/>
        <end position="36"/>
    </location>
</feature>
<feature type="transmembrane region" description="Helical" evidence="1">
    <location>
        <begin position="58"/>
        <end position="78"/>
    </location>
</feature>
<feature type="transmembrane region" description="Helical" evidence="1">
    <location>
        <begin position="92"/>
        <end position="112"/>
    </location>
</feature>
<feature type="transmembrane region" description="Helical" evidence="1">
    <location>
        <begin position="115"/>
        <end position="135"/>
    </location>
</feature>
<feature type="transmembrane region" description="Helical" evidence="1">
    <location>
        <begin position="146"/>
        <end position="166"/>
    </location>
</feature>
<feature type="transmembrane region" description="Helical" evidence="1">
    <location>
        <begin position="173"/>
        <end position="193"/>
    </location>
</feature>
<feature type="transmembrane region" description="Helical" evidence="1">
    <location>
        <begin position="224"/>
        <end position="244"/>
    </location>
</feature>
<feature type="transmembrane region" description="Helical" evidence="1">
    <location>
        <begin position="256"/>
        <end position="276"/>
    </location>
</feature>
<feature type="transmembrane region" description="Helical" evidence="1">
    <location>
        <begin position="290"/>
        <end position="310"/>
    </location>
</feature>
<feature type="transmembrane region" description="Helical" evidence="1">
    <location>
        <begin position="319"/>
        <end position="339"/>
    </location>
</feature>
<feature type="transmembrane region" description="Helical" evidence="1">
    <location>
        <begin position="378"/>
        <end position="398"/>
    </location>
</feature>
<protein>
    <recommendedName>
        <fullName evidence="1">Multidrug resistance protein MdtG</fullName>
    </recommendedName>
</protein>
<name>MDTG_ECODH</name>
<comment type="function">
    <text evidence="1">Confers resistance to fosfomycin and deoxycholate.</text>
</comment>
<comment type="subcellular location">
    <subcellularLocation>
        <location evidence="1">Cell inner membrane</location>
        <topology evidence="1">Multi-pass membrane protein</topology>
    </subcellularLocation>
</comment>
<comment type="similarity">
    <text evidence="1">Belongs to the major facilitator superfamily. DHA1 family. MdtG (TC 2.A.1.2.20) subfamily.</text>
</comment>
<keyword id="KW-0046">Antibiotic resistance</keyword>
<keyword id="KW-0997">Cell inner membrane</keyword>
<keyword id="KW-1003">Cell membrane</keyword>
<keyword id="KW-0472">Membrane</keyword>
<keyword id="KW-0812">Transmembrane</keyword>
<keyword id="KW-1133">Transmembrane helix</keyword>
<keyword id="KW-0813">Transport</keyword>